<comment type="function">
    <text evidence="6 15 25">Calcium-dependent lectin that mediates cell adhesion by binding to glycoproteins on neighboring cells (PubMed:12403782, PubMed:28011641, PubMed:28489325). Mediates the adherence of lymphocytes to endothelial cells of high endothelial venules in peripheral lymph nodes. Promotes initial tethering and rolling of leukocytes in endothelia (PubMed:12403782, PubMed:28011641).</text>
</comment>
<comment type="subunit">
    <text evidence="6 7 9">Interaction with SELPLG/PSGL1 and PODXL2 is required for promoting recruitment and rolling of leukocytes. This interaction is dependent on the sialyl Lewis X glycan modification of SELPLG and PODXL2, and tyrosine sulfation modifications of SELPLG. Sulfation on 'Tyr-51' of SELPLG is important for L-selectin binding.</text>
</comment>
<comment type="interaction">
    <interactant intactId="EBI-17865914">
        <id>P14151-2</id>
    </interactant>
    <interactant intactId="EBI-8644112">
        <id>Q9BRI3</id>
        <label>SLC30A2</label>
    </interactant>
    <organismsDiffer>false</organismsDiffer>
    <experiments>3</experiments>
</comment>
<comment type="subcellular location">
    <subcellularLocation>
        <location evidence="12 13 15">Cell membrane</location>
        <topology evidence="24">Single-pass type I membrane protein</topology>
    </subcellularLocation>
</comment>
<comment type="alternative products">
    <event type="alternative initiation"/>
    <isoform>
        <id>P14151-1</id>
        <name>1</name>
        <sequence type="displayed"/>
    </isoform>
    <isoform>
        <id>P14151-2</id>
        <name>2</name>
        <sequence type="described" ref="VSP_042650"/>
    </isoform>
    <text evidence="23">The start of isoform 1 corresponds to the N-terminus of mammalian orthologs. The start codon for isoform 2 is in the same exon and reading frame as that for isoform 1, suggesting alternative initiation.</text>
</comment>
<comment type="tissue specificity">
    <text evidence="11">Expressed in B-cell lines and T-lymphocytes.</text>
</comment>
<comment type="PTM">
    <text evidence="13 15 16">N-glycosylated.</text>
</comment>
<comment type="similarity">
    <text evidence="23">Belongs to the selectin/LECAM family.</text>
</comment>
<comment type="online information" name="Functional Glycomics Gateway - Glycan Binding">
    <link uri="http://www.functionalglycomics.org/glycomics/GBPServlet?&amp;operationType=view&amp;cbpId=cbp_hum_Ctlect_234"/>
    <text>L-selectin</text>
</comment>
<organism>
    <name type="scientific">Homo sapiens</name>
    <name type="common">Human</name>
    <dbReference type="NCBI Taxonomy" id="9606"/>
    <lineage>
        <taxon>Eukaryota</taxon>
        <taxon>Metazoa</taxon>
        <taxon>Chordata</taxon>
        <taxon>Craniata</taxon>
        <taxon>Vertebrata</taxon>
        <taxon>Euteleostomi</taxon>
        <taxon>Mammalia</taxon>
        <taxon>Eutheria</taxon>
        <taxon>Euarchontoglires</taxon>
        <taxon>Primates</taxon>
        <taxon>Haplorrhini</taxon>
        <taxon>Catarrhini</taxon>
        <taxon>Hominidae</taxon>
        <taxon>Homo</taxon>
    </lineage>
</organism>
<proteinExistence type="evidence at protein level"/>
<sequence>MIFPWKCQSTQRDLWNIFKLWGWTMLCCDFLAHHGTDCWTYHYSEKPMNWQRARRFCRDNYTDLVAIQNKAEIEYLEKTLPFSRSYYWIGIRKIGGIWTWVGTNKSLTEEAENWGDGEPNNKKNKEDCVEIYIKRNKDAGKWNDDACHKLKAALCYTASCQPWSCSGHGECVEIINNYTCNCDVGYYGPQCQFVIQCEPLEAPELGTMDCTHPLGNFSFSSQCAFSCSEGTNLTGIEETTCGPFGNWSSPEPTCQVIQCEPLSAPDLGIMNCSHPLASFSFTSACTFICSEGTELIGKKKTICESSGIWSNPSPICQKLDKSFSMIKEGDYNPLFIPVAVMVTAFSGLAFIIWLARRLKKGKKSKRSMNDPY</sequence>
<accession>P14151</accession>
<accession>A0A024R8Z0</accession>
<accession>B2R6Q8</accession>
<accession>P15023</accession>
<accession>Q9UJ43</accession>
<evidence type="ECO:0000250" key="1"/>
<evidence type="ECO:0000255" key="2"/>
<evidence type="ECO:0000255" key="3">
    <source>
        <dbReference type="PROSITE-ProRule" id="PRU00040"/>
    </source>
</evidence>
<evidence type="ECO:0000255" key="4">
    <source>
        <dbReference type="PROSITE-ProRule" id="PRU00076"/>
    </source>
</evidence>
<evidence type="ECO:0000255" key="5">
    <source>
        <dbReference type="PROSITE-ProRule" id="PRU00302"/>
    </source>
</evidence>
<evidence type="ECO:0000269" key="6">
    <source>
    </source>
</evidence>
<evidence type="ECO:0000269" key="7">
    <source>
    </source>
</evidence>
<evidence type="ECO:0000269" key="8">
    <source>
    </source>
</evidence>
<evidence type="ECO:0000269" key="9">
    <source>
    </source>
</evidence>
<evidence type="ECO:0000269" key="10">
    <source>
    </source>
</evidence>
<evidence type="ECO:0000269" key="11">
    <source>
    </source>
</evidence>
<evidence type="ECO:0000269" key="12">
    <source>
    </source>
</evidence>
<evidence type="ECO:0000269" key="13">
    <source>
    </source>
</evidence>
<evidence type="ECO:0000269" key="14">
    <source>
    </source>
</evidence>
<evidence type="ECO:0000269" key="15">
    <source>
    </source>
</evidence>
<evidence type="ECO:0000269" key="16">
    <source>
    </source>
</evidence>
<evidence type="ECO:0000269" key="17">
    <source ref="8"/>
</evidence>
<evidence type="ECO:0000303" key="18">
    <source>
    </source>
</evidence>
<evidence type="ECO:0000303" key="19">
    <source>
    </source>
</evidence>
<evidence type="ECO:0000303" key="20">
    <source>
    </source>
</evidence>
<evidence type="ECO:0000303" key="21">
    <source>
    </source>
</evidence>
<evidence type="ECO:0000303" key="22">
    <source ref="6"/>
</evidence>
<evidence type="ECO:0000305" key="23"/>
<evidence type="ECO:0000305" key="24">
    <source>
    </source>
</evidence>
<evidence type="ECO:0000305" key="25">
    <source>
    </source>
</evidence>
<evidence type="ECO:0007744" key="26">
    <source>
        <dbReference type="PDB" id="3CFW"/>
    </source>
</evidence>
<evidence type="ECO:0007744" key="27">
    <source>
        <dbReference type="PDB" id="5VC1"/>
    </source>
</evidence>
<evidence type="ECO:0007829" key="28">
    <source>
        <dbReference type="PDB" id="2LGF"/>
    </source>
</evidence>
<evidence type="ECO:0007829" key="29">
    <source>
        <dbReference type="PDB" id="3CFW"/>
    </source>
</evidence>
<evidence type="ECO:0007829" key="30">
    <source>
        <dbReference type="PDB" id="5VC1"/>
    </source>
</evidence>
<feature type="signal peptide">
    <location>
        <begin position="1"/>
        <end position="28"/>
    </location>
</feature>
<feature type="propeptide" id="PRO_0000017475">
    <location>
        <begin position="29"/>
        <end position="38"/>
    </location>
</feature>
<feature type="chain" id="PRO_0000017476" description="L-selectin">
    <location>
        <begin position="39"/>
        <end position="372"/>
    </location>
</feature>
<feature type="topological domain" description="Extracellular" evidence="2">
    <location>
        <begin position="39"/>
        <end position="332"/>
    </location>
</feature>
<feature type="transmembrane region" description="Helical" evidence="2">
    <location>
        <begin position="333"/>
        <end position="355"/>
    </location>
</feature>
<feature type="topological domain" description="Cytoplasmic" evidence="2">
    <location>
        <begin position="356"/>
        <end position="372"/>
    </location>
</feature>
<feature type="domain" description="C-type lectin" evidence="3">
    <location>
        <begin position="55"/>
        <end position="155"/>
    </location>
</feature>
<feature type="domain" description="EGF-like" evidence="4">
    <location>
        <begin position="156"/>
        <end position="192"/>
    </location>
</feature>
<feature type="domain" description="Sushi 1" evidence="5">
    <location>
        <begin position="195"/>
        <end position="256"/>
    </location>
</feature>
<feature type="domain" description="Sushi 2" evidence="5">
    <location>
        <begin position="257"/>
        <end position="318"/>
    </location>
</feature>
<feature type="binding site" evidence="15 16 26 27">
    <location>
        <position position="118"/>
    </location>
    <ligand>
        <name>Ca(2+)</name>
        <dbReference type="ChEBI" id="CHEBI:29108"/>
    </ligand>
</feature>
<feature type="binding site" evidence="15 16 26 27">
    <location>
        <position position="120"/>
    </location>
    <ligand>
        <name>Ca(2+)</name>
        <dbReference type="ChEBI" id="CHEBI:29108"/>
    </ligand>
</feature>
<feature type="binding site" evidence="15 16 26 27">
    <location>
        <position position="126"/>
    </location>
    <ligand>
        <name>Ca(2+)</name>
        <dbReference type="ChEBI" id="CHEBI:29108"/>
    </ligand>
</feature>
<feature type="binding site" evidence="15 16 26 27">
    <location>
        <position position="143"/>
    </location>
    <ligand>
        <name>Ca(2+)</name>
        <dbReference type="ChEBI" id="CHEBI:29108"/>
    </ligand>
</feature>
<feature type="binding site" evidence="15 16 26 27">
    <location>
        <position position="144"/>
    </location>
    <ligand>
        <name>Ca(2+)</name>
        <dbReference type="ChEBI" id="CHEBI:29108"/>
    </ligand>
</feature>
<feature type="glycosylation site" description="N-linked (GlcNAc...) asparagine" evidence="8 10 15 25 26">
    <location>
        <position position="60"/>
    </location>
</feature>
<feature type="glycosylation site" description="N-linked (GlcNAc...) asparagine" evidence="10 15 16 26">
    <location>
        <position position="104"/>
    </location>
</feature>
<feature type="glycosylation site" description="N-linked (GlcNAc...) asparagine" evidence="25">
    <location>
        <position position="177"/>
    </location>
</feature>
<feature type="glycosylation site" description="N-linked (GlcNAc...) asparagine" evidence="2">
    <location>
        <position position="232"/>
    </location>
</feature>
<feature type="glycosylation site" description="N-linked (GlcNAc...) asparagine" evidence="2">
    <location>
        <position position="246"/>
    </location>
</feature>
<feature type="glycosylation site" description="N-linked (GlcNAc...) asparagine" evidence="2">
    <location>
        <position position="271"/>
    </location>
</feature>
<feature type="disulfide bond" evidence="15 16 26 27">
    <location>
        <begin position="57"/>
        <end position="155"/>
    </location>
</feature>
<feature type="disulfide bond" evidence="15 16 26 27">
    <location>
        <begin position="128"/>
        <end position="147"/>
    </location>
</feature>
<feature type="disulfide bond" evidence="15 16 26 27">
    <location>
        <begin position="160"/>
        <end position="171"/>
    </location>
</feature>
<feature type="disulfide bond" evidence="15 16 26">
    <location>
        <begin position="165"/>
        <end position="180"/>
    </location>
</feature>
<feature type="disulfide bond" evidence="15 16 26 27">
    <location>
        <begin position="182"/>
        <end position="191"/>
    </location>
</feature>
<feature type="disulfide bond" evidence="1">
    <location>
        <begin position="197"/>
        <end position="241"/>
    </location>
</feature>
<feature type="disulfide bond" evidence="1">
    <location>
        <begin position="227"/>
        <end position="254"/>
    </location>
</feature>
<feature type="disulfide bond" evidence="1">
    <location>
        <begin position="259"/>
        <end position="303"/>
    </location>
</feature>
<feature type="disulfide bond" evidence="1">
    <location>
        <begin position="289"/>
        <end position="316"/>
    </location>
</feature>
<feature type="splice variant" id="VSP_042650" description="In isoform 2." evidence="20 22">
    <original>M</original>
    <variation>MGCRRTREGPSKAM</variation>
    <location>
        <position position="1"/>
    </location>
</feature>
<feature type="sequence variant" id="VAR_019134" description="In dbSNP:rs1131498." evidence="13 14 17">
    <original>F</original>
    <variation>L</variation>
    <location>
        <position position="193"/>
    </location>
</feature>
<feature type="sequence variant" id="VAR_019135" description="In dbSNP:rs2229568." evidence="17">
    <original>E</original>
    <variation>Q</variation>
    <location>
        <position position="201"/>
    </location>
</feature>
<feature type="sequence variant" id="VAR_019136" description="In dbSNP:rs2229569." evidence="12 17">
    <original>P</original>
    <variation>S</variation>
    <location>
        <position position="213"/>
    </location>
</feature>
<feature type="sequence variant" id="VAR_019137" description="In dbSNP:rs4987382." evidence="17">
    <original>N</original>
    <variation>D</variation>
    <location>
        <position position="369"/>
    </location>
</feature>
<feature type="mutagenesis site" description="Loss of one glycosylation site." evidence="16">
    <original>N</original>
    <variation>Q</variation>
    <location>
        <position position="60"/>
    </location>
</feature>
<feature type="mutagenesis site" description="Loss of one glycosylation site." evidence="16">
    <original>N</original>
    <variation>Q</variation>
    <location>
        <position position="104"/>
    </location>
</feature>
<feature type="mutagenesis site" description="Impairs interaction with cognate oligosaccharide. Abolishes cell rolling on glycan ligands." evidence="15">
    <original>E</original>
    <variation>D</variation>
    <location>
        <position position="126"/>
    </location>
</feature>
<feature type="mutagenesis site" description="Loss of one glycosylation site." evidence="16">
    <original>N</original>
    <variation>Q</variation>
    <location>
        <position position="177"/>
    </location>
</feature>
<feature type="sequence conflict" description="In Ref. 4; CAA34203." evidence="23" ref="4">
    <original>D</original>
    <variation>Y</variation>
    <location>
        <position position="37"/>
    </location>
</feature>
<feature type="sequence conflict" description="In Ref. 4; CAA34203." evidence="23" ref="4">
    <original>Y</original>
    <variation>H</variation>
    <location>
        <position position="178"/>
    </location>
</feature>
<feature type="sequence conflict" description="In Ref. 4; CAA34203." evidence="23" ref="4">
    <original>L</original>
    <variation>F</variation>
    <location>
        <position position="214"/>
    </location>
</feature>
<feature type="sequence conflict" description="In Ref. 2; CAA34275." evidence="23" ref="2">
    <original>SFS</original>
    <variation>NFN</variation>
    <location>
        <begin position="218"/>
        <end position="220"/>
    </location>
</feature>
<feature type="sequence conflict" description="In Ref. 2; CAA34275." evidence="23" ref="2">
    <original>G</original>
    <variation>E</variation>
    <location>
        <position position="242"/>
    </location>
</feature>
<feature type="strand" evidence="30">
    <location>
        <begin position="40"/>
        <end position="43"/>
    </location>
</feature>
<feature type="helix" evidence="30">
    <location>
        <begin position="50"/>
        <end position="60"/>
    </location>
</feature>
<feature type="strand" evidence="30">
    <location>
        <begin position="61"/>
        <end position="64"/>
    </location>
</feature>
<feature type="helix" evidence="30">
    <location>
        <begin position="70"/>
        <end position="79"/>
    </location>
</feature>
<feature type="strand" evidence="30">
    <location>
        <begin position="90"/>
        <end position="94"/>
    </location>
</feature>
<feature type="strand" evidence="30">
    <location>
        <begin position="97"/>
        <end position="100"/>
    </location>
</feature>
<feature type="turn" evidence="30">
    <location>
        <begin position="101"/>
        <end position="104"/>
    </location>
</feature>
<feature type="turn" evidence="30">
    <location>
        <begin position="109"/>
        <end position="111"/>
    </location>
</feature>
<feature type="helix" evidence="30">
    <location>
        <begin position="122"/>
        <end position="124"/>
    </location>
</feature>
<feature type="strand" evidence="30">
    <location>
        <begin position="128"/>
        <end position="131"/>
    </location>
</feature>
<feature type="strand" evidence="30">
    <location>
        <begin position="136"/>
        <end position="138"/>
    </location>
</feature>
<feature type="strand" evidence="30">
    <location>
        <begin position="142"/>
        <end position="145"/>
    </location>
</feature>
<feature type="strand" evidence="30">
    <location>
        <begin position="151"/>
        <end position="157"/>
    </location>
</feature>
<feature type="strand" evidence="30">
    <location>
        <begin position="167"/>
        <end position="174"/>
    </location>
</feature>
<feature type="strand" evidence="30">
    <location>
        <begin position="177"/>
        <end position="181"/>
    </location>
</feature>
<feature type="strand" evidence="29">
    <location>
        <begin position="187"/>
        <end position="191"/>
    </location>
</feature>
<feature type="helix" evidence="28">
    <location>
        <begin position="350"/>
        <end position="362"/>
    </location>
</feature>
<reference key="1">
    <citation type="journal article" date="1989" name="Proc. Natl. Acad. Sci. U.S.A.">
        <title>Human homologue of mouse lymph node homing receptor: evolutionary conservation at tandem cell interaction domains.</title>
        <authorList>
            <person name="Siegelman M.H."/>
            <person name="Weissman I.L."/>
        </authorList>
    </citation>
    <scope>NUCLEOTIDE SEQUENCE [MRNA] (ISOFORM 1)</scope>
    <scope>VARIANT LEU-193</scope>
    <source>
        <tissue>Lymphocyte</tissue>
    </source>
</reference>
<reference key="2">
    <citation type="journal article" date="1989" name="J. Exp. Med.">
        <title>Isolation and chromosomal localization of cDNAs encoding a novel human lymphocyte cell surface molecule, LAM-1. Homology with the mouse lymphocyte homing receptor and other human adhesion proteins.</title>
        <authorList>
            <person name="Tedder T.F."/>
            <person name="Isaacs C.M."/>
            <person name="Ernst T.J."/>
            <person name="Demetri G.D."/>
            <person name="Adler D.A."/>
            <person name="Disteche C.M."/>
        </authorList>
    </citation>
    <scope>NUCLEOTIDE SEQUENCE [MRNA] (ISOFORM 1)</scope>
    <scope>TISSUE SPECIFICITY</scope>
    <source>
        <tissue>Tonsil</tissue>
    </source>
</reference>
<reference key="3">
    <citation type="journal article" date="1989" name="Nature">
        <title>Leu-8/TQ1 is the human equivalent of the Mel-14 lymph node homing receptor.</title>
        <authorList>
            <person name="Camerini D."/>
            <person name="James S.P."/>
            <person name="Stamenkovic I."/>
            <person name="Seed B."/>
        </authorList>
    </citation>
    <scope>NUCLEOTIDE SEQUENCE [MRNA] (ISOFORM 2)</scope>
    <scope>SUBCELLULAR LOCATION</scope>
    <scope>VARIANT SER-213</scope>
    <source>
        <tissue>Lymphocyte</tissue>
    </source>
</reference>
<reference key="4">
    <citation type="journal article" date="1989" name="J. Cell Biol.">
        <title>Characterization of a human homologue of the murine peripheral lymph node homing receptor.</title>
        <authorList>
            <person name="Bowen B.R."/>
            <person name="Nguyen T."/>
            <person name="Lasky L.A."/>
        </authorList>
    </citation>
    <scope>NUCLEOTIDE SEQUENCE [MRNA] (ISOFORM 1)</scope>
    <scope>SUBCELLULAR LOCATION</scope>
    <scope>GLYCOSYLATION</scope>
    <scope>VARIANT LEU-193</scope>
    <source>
        <tissue>Lymphocyte</tissue>
    </source>
</reference>
<reference key="5">
    <citation type="journal article" date="1990" name="J. Biol. Chem.">
        <title>Structure of the gene encoding the human leukocyte adhesion molecule-1 (TQ1, Leu-8) of lymphocytes and neutrophils.</title>
        <authorList>
            <person name="Ord D.C."/>
            <person name="Ernst T.J."/>
            <person name="Zhou L.J."/>
            <person name="Rambaldi A."/>
            <person name="Spertini O."/>
            <person name="Griffin J."/>
            <person name="Tedder T.F."/>
        </authorList>
    </citation>
    <scope>NUCLEOTIDE SEQUENCE [GENOMIC DNA]</scope>
</reference>
<reference key="6">
    <citation type="thesis" date="1998" institute="Freie Universtiaet Berlin" country="Germany">
        <authorList>
            <person name="Fieger C.B."/>
        </authorList>
    </citation>
    <scope>NUCLEOTIDE SEQUENCE [MRNA] (ISOFORM 2)</scope>
    <source>
        <tissue>Hematopoietic</tissue>
    </source>
</reference>
<reference key="7">
    <citation type="journal article" date="2004" name="Nat. Genet.">
        <title>Complete sequencing and characterization of 21,243 full-length human cDNAs.</title>
        <authorList>
            <person name="Ota T."/>
            <person name="Suzuki Y."/>
            <person name="Nishikawa T."/>
            <person name="Otsuki T."/>
            <person name="Sugiyama T."/>
            <person name="Irie R."/>
            <person name="Wakamatsu A."/>
            <person name="Hayashi K."/>
            <person name="Sato H."/>
            <person name="Nagai K."/>
            <person name="Kimura K."/>
            <person name="Makita H."/>
            <person name="Sekine M."/>
            <person name="Obayashi M."/>
            <person name="Nishi T."/>
            <person name="Shibahara T."/>
            <person name="Tanaka T."/>
            <person name="Ishii S."/>
            <person name="Yamamoto J."/>
            <person name="Saito K."/>
            <person name="Kawai Y."/>
            <person name="Isono Y."/>
            <person name="Nakamura Y."/>
            <person name="Nagahari K."/>
            <person name="Murakami K."/>
            <person name="Yasuda T."/>
            <person name="Iwayanagi T."/>
            <person name="Wagatsuma M."/>
            <person name="Shiratori A."/>
            <person name="Sudo H."/>
            <person name="Hosoiri T."/>
            <person name="Kaku Y."/>
            <person name="Kodaira H."/>
            <person name="Kondo H."/>
            <person name="Sugawara M."/>
            <person name="Takahashi M."/>
            <person name="Kanda K."/>
            <person name="Yokoi T."/>
            <person name="Furuya T."/>
            <person name="Kikkawa E."/>
            <person name="Omura Y."/>
            <person name="Abe K."/>
            <person name="Kamihara K."/>
            <person name="Katsuta N."/>
            <person name="Sato K."/>
            <person name="Tanikawa M."/>
            <person name="Yamazaki M."/>
            <person name="Ninomiya K."/>
            <person name="Ishibashi T."/>
            <person name="Yamashita H."/>
            <person name="Murakawa K."/>
            <person name="Fujimori K."/>
            <person name="Tanai H."/>
            <person name="Kimata M."/>
            <person name="Watanabe M."/>
            <person name="Hiraoka S."/>
            <person name="Chiba Y."/>
            <person name="Ishida S."/>
            <person name="Ono Y."/>
            <person name="Takiguchi S."/>
            <person name="Watanabe S."/>
            <person name="Yosida M."/>
            <person name="Hotuta T."/>
            <person name="Kusano J."/>
            <person name="Kanehori K."/>
            <person name="Takahashi-Fujii A."/>
            <person name="Hara H."/>
            <person name="Tanase T.-O."/>
            <person name="Nomura Y."/>
            <person name="Togiya S."/>
            <person name="Komai F."/>
            <person name="Hara R."/>
            <person name="Takeuchi K."/>
            <person name="Arita M."/>
            <person name="Imose N."/>
            <person name="Musashino K."/>
            <person name="Yuuki H."/>
            <person name="Oshima A."/>
            <person name="Sasaki N."/>
            <person name="Aotsuka S."/>
            <person name="Yoshikawa Y."/>
            <person name="Matsunawa H."/>
            <person name="Ichihara T."/>
            <person name="Shiohata N."/>
            <person name="Sano S."/>
            <person name="Moriya S."/>
            <person name="Momiyama H."/>
            <person name="Satoh N."/>
            <person name="Takami S."/>
            <person name="Terashima Y."/>
            <person name="Suzuki O."/>
            <person name="Nakagawa S."/>
            <person name="Senoh A."/>
            <person name="Mizoguchi H."/>
            <person name="Goto Y."/>
            <person name="Shimizu F."/>
            <person name="Wakebe H."/>
            <person name="Hishigaki H."/>
            <person name="Watanabe T."/>
            <person name="Sugiyama A."/>
            <person name="Takemoto M."/>
            <person name="Kawakami B."/>
            <person name="Yamazaki M."/>
            <person name="Watanabe K."/>
            <person name="Kumagai A."/>
            <person name="Itakura S."/>
            <person name="Fukuzumi Y."/>
            <person name="Fujimori Y."/>
            <person name="Komiyama M."/>
            <person name="Tashiro H."/>
            <person name="Tanigami A."/>
            <person name="Fujiwara T."/>
            <person name="Ono T."/>
            <person name="Yamada K."/>
            <person name="Fujii Y."/>
            <person name="Ozaki K."/>
            <person name="Hirao M."/>
            <person name="Ohmori Y."/>
            <person name="Kawabata A."/>
            <person name="Hikiji T."/>
            <person name="Kobatake N."/>
            <person name="Inagaki H."/>
            <person name="Ikema Y."/>
            <person name="Okamoto S."/>
            <person name="Okitani R."/>
            <person name="Kawakami T."/>
            <person name="Noguchi S."/>
            <person name="Itoh T."/>
            <person name="Shigeta K."/>
            <person name="Senba T."/>
            <person name="Matsumura K."/>
            <person name="Nakajima Y."/>
            <person name="Mizuno T."/>
            <person name="Morinaga M."/>
            <person name="Sasaki M."/>
            <person name="Togashi T."/>
            <person name="Oyama M."/>
            <person name="Hata H."/>
            <person name="Watanabe M."/>
            <person name="Komatsu T."/>
            <person name="Mizushima-Sugano J."/>
            <person name="Satoh T."/>
            <person name="Shirai Y."/>
            <person name="Takahashi Y."/>
            <person name="Nakagawa K."/>
            <person name="Okumura K."/>
            <person name="Nagase T."/>
            <person name="Nomura N."/>
            <person name="Kikuchi H."/>
            <person name="Masuho Y."/>
            <person name="Yamashita R."/>
            <person name="Nakai K."/>
            <person name="Yada T."/>
            <person name="Nakamura Y."/>
            <person name="Ohara O."/>
            <person name="Isogai T."/>
            <person name="Sugano S."/>
        </authorList>
    </citation>
    <scope>NUCLEOTIDE SEQUENCE [LARGE SCALE MRNA] (ISOFORM 1)</scope>
</reference>
<reference key="8">
    <citation type="submission" date="2003-02" db="EMBL/GenBank/DDBJ databases">
        <authorList>
            <consortium name="SeattleSNPs variation discovery resource"/>
        </authorList>
    </citation>
    <scope>NUCLEOTIDE SEQUENCE [GENOMIC DNA]</scope>
    <scope>VARIANTS LEU-193; GLN-201; SER-213 AND ASP-369</scope>
</reference>
<reference key="9">
    <citation type="journal article" date="2006" name="Nature">
        <title>The DNA sequence and biological annotation of human chromosome 1.</title>
        <authorList>
            <person name="Gregory S.G."/>
            <person name="Barlow K.F."/>
            <person name="McLay K.E."/>
            <person name="Kaul R."/>
            <person name="Swarbreck D."/>
            <person name="Dunham A."/>
            <person name="Scott C.E."/>
            <person name="Howe K.L."/>
            <person name="Woodfine K."/>
            <person name="Spencer C.C.A."/>
            <person name="Jones M.C."/>
            <person name="Gillson C."/>
            <person name="Searle S."/>
            <person name="Zhou Y."/>
            <person name="Kokocinski F."/>
            <person name="McDonald L."/>
            <person name="Evans R."/>
            <person name="Phillips K."/>
            <person name="Atkinson A."/>
            <person name="Cooper R."/>
            <person name="Jones C."/>
            <person name="Hall R.E."/>
            <person name="Andrews T.D."/>
            <person name="Lloyd C."/>
            <person name="Ainscough R."/>
            <person name="Almeida J.P."/>
            <person name="Ambrose K.D."/>
            <person name="Anderson F."/>
            <person name="Andrew R.W."/>
            <person name="Ashwell R.I.S."/>
            <person name="Aubin K."/>
            <person name="Babbage A.K."/>
            <person name="Bagguley C.L."/>
            <person name="Bailey J."/>
            <person name="Beasley H."/>
            <person name="Bethel G."/>
            <person name="Bird C.P."/>
            <person name="Bray-Allen S."/>
            <person name="Brown J.Y."/>
            <person name="Brown A.J."/>
            <person name="Buckley D."/>
            <person name="Burton J."/>
            <person name="Bye J."/>
            <person name="Carder C."/>
            <person name="Chapman J.C."/>
            <person name="Clark S.Y."/>
            <person name="Clarke G."/>
            <person name="Clee C."/>
            <person name="Cobley V."/>
            <person name="Collier R.E."/>
            <person name="Corby N."/>
            <person name="Coville G.J."/>
            <person name="Davies J."/>
            <person name="Deadman R."/>
            <person name="Dunn M."/>
            <person name="Earthrowl M."/>
            <person name="Ellington A.G."/>
            <person name="Errington H."/>
            <person name="Frankish A."/>
            <person name="Frankland J."/>
            <person name="French L."/>
            <person name="Garner P."/>
            <person name="Garnett J."/>
            <person name="Gay L."/>
            <person name="Ghori M.R.J."/>
            <person name="Gibson R."/>
            <person name="Gilby L.M."/>
            <person name="Gillett W."/>
            <person name="Glithero R.J."/>
            <person name="Grafham D.V."/>
            <person name="Griffiths C."/>
            <person name="Griffiths-Jones S."/>
            <person name="Grocock R."/>
            <person name="Hammond S."/>
            <person name="Harrison E.S.I."/>
            <person name="Hart E."/>
            <person name="Haugen E."/>
            <person name="Heath P.D."/>
            <person name="Holmes S."/>
            <person name="Holt K."/>
            <person name="Howden P.J."/>
            <person name="Hunt A.R."/>
            <person name="Hunt S.E."/>
            <person name="Hunter G."/>
            <person name="Isherwood J."/>
            <person name="James R."/>
            <person name="Johnson C."/>
            <person name="Johnson D."/>
            <person name="Joy A."/>
            <person name="Kay M."/>
            <person name="Kershaw J.K."/>
            <person name="Kibukawa M."/>
            <person name="Kimberley A.M."/>
            <person name="King A."/>
            <person name="Knights A.J."/>
            <person name="Lad H."/>
            <person name="Laird G."/>
            <person name="Lawlor S."/>
            <person name="Leongamornlert D.A."/>
            <person name="Lloyd D.M."/>
            <person name="Loveland J."/>
            <person name="Lovell J."/>
            <person name="Lush M.J."/>
            <person name="Lyne R."/>
            <person name="Martin S."/>
            <person name="Mashreghi-Mohammadi M."/>
            <person name="Matthews L."/>
            <person name="Matthews N.S.W."/>
            <person name="McLaren S."/>
            <person name="Milne S."/>
            <person name="Mistry S."/>
            <person name="Moore M.J.F."/>
            <person name="Nickerson T."/>
            <person name="O'Dell C.N."/>
            <person name="Oliver K."/>
            <person name="Palmeiri A."/>
            <person name="Palmer S.A."/>
            <person name="Parker A."/>
            <person name="Patel D."/>
            <person name="Pearce A.V."/>
            <person name="Peck A.I."/>
            <person name="Pelan S."/>
            <person name="Phelps K."/>
            <person name="Phillimore B.J."/>
            <person name="Plumb R."/>
            <person name="Rajan J."/>
            <person name="Raymond C."/>
            <person name="Rouse G."/>
            <person name="Saenphimmachak C."/>
            <person name="Sehra H.K."/>
            <person name="Sheridan E."/>
            <person name="Shownkeen R."/>
            <person name="Sims S."/>
            <person name="Skuce C.D."/>
            <person name="Smith M."/>
            <person name="Steward C."/>
            <person name="Subramanian S."/>
            <person name="Sycamore N."/>
            <person name="Tracey A."/>
            <person name="Tromans A."/>
            <person name="Van Helmond Z."/>
            <person name="Wall M."/>
            <person name="Wallis J.M."/>
            <person name="White S."/>
            <person name="Whitehead S.L."/>
            <person name="Wilkinson J.E."/>
            <person name="Willey D.L."/>
            <person name="Williams H."/>
            <person name="Wilming L."/>
            <person name="Wray P.W."/>
            <person name="Wu Z."/>
            <person name="Coulson A."/>
            <person name="Vaudin M."/>
            <person name="Sulston J.E."/>
            <person name="Durbin R.M."/>
            <person name="Hubbard T."/>
            <person name="Wooster R."/>
            <person name="Dunham I."/>
            <person name="Carter N.P."/>
            <person name="McVean G."/>
            <person name="Ross M.T."/>
            <person name="Harrow J."/>
            <person name="Olson M.V."/>
            <person name="Beck S."/>
            <person name="Rogers J."/>
            <person name="Bentley D.R."/>
        </authorList>
    </citation>
    <scope>NUCLEOTIDE SEQUENCE [LARGE SCALE GENOMIC DNA]</scope>
</reference>
<reference key="10">
    <citation type="submission" date="2005-07" db="EMBL/GenBank/DDBJ databases">
        <authorList>
            <person name="Mural R.J."/>
            <person name="Istrail S."/>
            <person name="Sutton G."/>
            <person name="Florea L."/>
            <person name="Halpern A.L."/>
            <person name="Mobarry C.M."/>
            <person name="Lippert R."/>
            <person name="Walenz B."/>
            <person name="Shatkay H."/>
            <person name="Dew I."/>
            <person name="Miller J.R."/>
            <person name="Flanigan M.J."/>
            <person name="Edwards N.J."/>
            <person name="Bolanos R."/>
            <person name="Fasulo D."/>
            <person name="Halldorsson B.V."/>
            <person name="Hannenhalli S."/>
            <person name="Turner R."/>
            <person name="Yooseph S."/>
            <person name="Lu F."/>
            <person name="Nusskern D.R."/>
            <person name="Shue B.C."/>
            <person name="Zheng X.H."/>
            <person name="Zhong F."/>
            <person name="Delcher A.L."/>
            <person name="Huson D.H."/>
            <person name="Kravitz S.A."/>
            <person name="Mouchard L."/>
            <person name="Reinert K."/>
            <person name="Remington K.A."/>
            <person name="Clark A.G."/>
            <person name="Waterman M.S."/>
            <person name="Eichler E.E."/>
            <person name="Adams M.D."/>
            <person name="Hunkapiller M.W."/>
            <person name="Myers E.W."/>
            <person name="Venter J.C."/>
        </authorList>
    </citation>
    <scope>NUCLEOTIDE SEQUENCE [LARGE SCALE GENOMIC DNA]</scope>
</reference>
<reference key="11">
    <citation type="journal article" date="2005" name="J. Proteome Res.">
        <title>Human plasma N-glycoproteome analysis by immunoaffinity subtraction, hydrazide chemistry, and mass spectrometry.</title>
        <authorList>
            <person name="Liu T."/>
            <person name="Qian W.-J."/>
            <person name="Gritsenko M.A."/>
            <person name="Camp D.G. II"/>
            <person name="Monroe M.E."/>
            <person name="Moore R.J."/>
            <person name="Smith R.D."/>
        </authorList>
    </citation>
    <scope>GLYCOSYLATION [LARGE SCALE ANALYSIS] AT ASN-60</scope>
    <source>
        <tissue>Plasma</tissue>
    </source>
</reference>
<reference key="12">
    <citation type="journal article" date="2003" name="J. Biol. Chem.">
        <title>Molecular basis of leukocyte rolling on PSGL-1. Predominant role of core-2 O-glycans and of tyrosine sulfate residue 51.</title>
        <authorList>
            <person name="Bernimoulin M.P."/>
            <person name="Zeng X.-L."/>
            <person name="Abbal C."/>
            <person name="Giraud S."/>
            <person name="Martinez M."/>
            <person name="Michielin O."/>
            <person name="Schapira M."/>
            <person name="Spertini O."/>
        </authorList>
    </citation>
    <scope>INTERACTION WITH SELPLG</scope>
    <scope>FUNCTION</scope>
</reference>
<reference key="13">
    <citation type="journal article" date="2003" name="J. Biol. Chem.">
        <title>Model glycosulfopeptides from P-selectin glycoprotein ligand-1 require tyrosine sulfation and a core 2-branched O-glycan to bind to L-selectin.</title>
        <authorList>
            <person name="Leppaenen A."/>
            <person name="Yago T."/>
            <person name="Otto V.I."/>
            <person name="McEver R.P."/>
            <person name="Cummings R.D."/>
        </authorList>
    </citation>
    <scope>INTERACTION WITH SELPLG</scope>
</reference>
<reference key="14">
    <citation type="journal article" date="2008" name="J. Immunol.">
        <title>Endoglycan, a member of the CD34 family of sialomucins, is a ligand for the vascular selectins.</title>
        <authorList>
            <person name="Kerr S.C."/>
            <person name="Fieger C.B."/>
            <person name="Snapp K.R."/>
            <person name="Rosen S.D."/>
        </authorList>
    </citation>
    <scope>INTERACTION WITH PODXL2</scope>
</reference>
<reference key="15">
    <citation type="journal article" date="2009" name="Nat. Biotechnol.">
        <title>Mass-spectrometric identification and relative quantification of N-linked cell surface glycoproteins.</title>
        <authorList>
            <person name="Wollscheid B."/>
            <person name="Bausch-Fluck D."/>
            <person name="Henderson C."/>
            <person name="O'Brien R."/>
            <person name="Bibel M."/>
            <person name="Schiess R."/>
            <person name="Aebersold R."/>
            <person name="Watts J.D."/>
        </authorList>
    </citation>
    <scope>GLYCOSYLATION [LARGE SCALE ANALYSIS] AT ASN-60 AND ASN-104</scope>
    <source>
        <tissue>Leukemic T-cell</tissue>
    </source>
</reference>
<reference key="16">
    <citation type="journal article" date="1995" name="Biochem. Biophys. Res. Commun.">
        <title>A template for generation and comparison of three-dimensional selectin models.</title>
        <authorList>
            <person name="Bajorath J."/>
            <person name="Aruffo A."/>
        </authorList>
    </citation>
    <scope>3D-STRUCTURE MODELING</scope>
</reference>
<reference evidence="27" key="17">
    <citation type="journal article" date="2017" name="ChemBioChem">
        <title>Reducing Macro- and Microheterogeneity of N-Glycans Enables the Crystal Structure of the Lectin and EGF-Like Domains of Human L-Selectin To Be Solved at 1.9 A Resolution.</title>
        <authorList>
            <person name="Wedepohl S."/>
            <person name="Dernedde J."/>
            <person name="Vahedi-Faridi A."/>
            <person name="Tauber R."/>
            <person name="Saenger W."/>
            <person name="Bulut H."/>
        </authorList>
    </citation>
    <scope>X-RAY CRYSTALLOGRAPHY (1.94 ANGSTROMS) OF 39-195 IN COMPLEX WITH CALCIUM IONS</scope>
    <scope>FUNCTION</scope>
    <scope>DISULFIDE BONDS</scope>
    <scope>GLYCOSYLATION AT ASN-60; ASN-104 AND ASN-177</scope>
    <scope>MUTAGENESIS OF ASN-60; ASN-104 AND ASN-177</scope>
</reference>
<reference evidence="26" key="18">
    <citation type="journal article" date="2017" name="J. Biol. Chem.">
        <title>Glycan Bound to the Selectin Low Affinity State Engages Glu-88 to Stabilize the High Affinity State under Force.</title>
        <authorList>
            <person name="Mehta-D'souza P."/>
            <person name="Klopocki A.G."/>
            <person name="Oganesyan V."/>
            <person name="Terzyan S."/>
            <person name="Mather T."/>
            <person name="Li Z."/>
            <person name="Panicker S.R."/>
            <person name="Zhu C."/>
            <person name="McEver R.P."/>
        </authorList>
    </citation>
    <scope>X-RAY CRYSTALLOGRAPHY (2.20 ANGSTROMS) OF 39-194 IN COMPLEX WITH CALCIUM IONS</scope>
    <scope>FUNCTION</scope>
    <scope>SUBCELLULAR LOCATION</scope>
    <scope>GLYCOSYLATION AT ASN-60 AND ASN-104</scope>
    <scope>MUTAGENESIS OF GLU-126</scope>
    <scope>DISULFIDE BONDS</scope>
</reference>
<protein>
    <recommendedName>
        <fullName>L-selectin</fullName>
    </recommendedName>
    <alternativeName>
        <fullName>CD62 antigen-like family member L</fullName>
    </alternativeName>
    <alternativeName>
        <fullName>Leukocyte adhesion molecule 1</fullName>
        <shortName evidence="19">LAM-1</shortName>
    </alternativeName>
    <alternativeName>
        <fullName>Leukocyte surface antigen Leu-8</fullName>
    </alternativeName>
    <alternativeName>
        <fullName>Leukocyte-endothelial cell adhesion molecule 1</fullName>
        <shortName>LECAM1</shortName>
    </alternativeName>
    <alternativeName>
        <fullName evidence="21">Lymph node homing receptor</fullName>
    </alternativeName>
    <alternativeName>
        <fullName evidence="18 20">TQ1</fullName>
    </alternativeName>
    <alternativeName>
        <fullName>gp90-MEL</fullName>
    </alternativeName>
    <cdAntigenName>CD62L</cdAntigenName>
</protein>
<name>LYAM1_HUMAN</name>
<gene>
    <name type="primary">SELL</name>
    <name type="synonym">LNHR</name>
    <name type="synonym">LYAM1</name>
</gene>
<keyword id="KW-0002">3D-structure</keyword>
<keyword id="KW-0024">Alternative initiation</keyword>
<keyword id="KW-0106">Calcium</keyword>
<keyword id="KW-0130">Cell adhesion</keyword>
<keyword id="KW-1003">Cell membrane</keyword>
<keyword id="KW-1015">Disulfide bond</keyword>
<keyword id="KW-0245">EGF-like domain</keyword>
<keyword id="KW-0325">Glycoprotein</keyword>
<keyword id="KW-0430">Lectin</keyword>
<keyword id="KW-0472">Membrane</keyword>
<keyword id="KW-0479">Metal-binding</keyword>
<keyword id="KW-1267">Proteomics identification</keyword>
<keyword id="KW-1185">Reference proteome</keyword>
<keyword id="KW-0677">Repeat</keyword>
<keyword id="KW-0732">Signal</keyword>
<keyword id="KW-0768">Sushi</keyword>
<keyword id="KW-0812">Transmembrane</keyword>
<keyword id="KW-1133">Transmembrane helix</keyword>
<dbReference type="EMBL" id="M25280">
    <property type="protein sequence ID" value="AAC63053.1"/>
    <property type="molecule type" value="mRNA"/>
</dbReference>
<dbReference type="EMBL" id="X16150">
    <property type="protein sequence ID" value="CAA34275.1"/>
    <property type="molecule type" value="mRNA"/>
</dbReference>
<dbReference type="EMBL" id="X17519">
    <property type="protein sequence ID" value="CAB43536.1"/>
    <property type="molecule type" value="mRNA"/>
</dbReference>
<dbReference type="EMBL" id="X17519">
    <property type="protein sequence ID" value="CAB43537.1"/>
    <property type="molecule type" value="mRNA"/>
</dbReference>
<dbReference type="EMBL" id="X16070">
    <property type="protein sequence ID" value="CAA34203.1"/>
    <property type="molecule type" value="mRNA"/>
</dbReference>
<dbReference type="EMBL" id="M32414">
    <property type="protein sequence ID" value="AAB60700.1"/>
    <property type="molecule type" value="Genomic_DNA"/>
</dbReference>
<dbReference type="EMBL" id="M32406">
    <property type="protein sequence ID" value="AAB60700.1"/>
    <property type="status" value="JOINED"/>
    <property type="molecule type" value="Genomic_DNA"/>
</dbReference>
<dbReference type="EMBL" id="M32407">
    <property type="protein sequence ID" value="AAB60700.1"/>
    <property type="status" value="JOINED"/>
    <property type="molecule type" value="Genomic_DNA"/>
</dbReference>
<dbReference type="EMBL" id="M32408">
    <property type="protein sequence ID" value="AAB60700.1"/>
    <property type="status" value="JOINED"/>
    <property type="molecule type" value="Genomic_DNA"/>
</dbReference>
<dbReference type="EMBL" id="M32409">
    <property type="protein sequence ID" value="AAB60700.1"/>
    <property type="status" value="JOINED"/>
    <property type="molecule type" value="Genomic_DNA"/>
</dbReference>
<dbReference type="EMBL" id="M32410">
    <property type="protein sequence ID" value="AAB60700.1"/>
    <property type="status" value="JOINED"/>
    <property type="molecule type" value="Genomic_DNA"/>
</dbReference>
<dbReference type="EMBL" id="M32411">
    <property type="protein sequence ID" value="AAB60700.1"/>
    <property type="status" value="JOINED"/>
    <property type="molecule type" value="Genomic_DNA"/>
</dbReference>
<dbReference type="EMBL" id="M32412">
    <property type="protein sequence ID" value="AAB60700.1"/>
    <property type="status" value="JOINED"/>
    <property type="molecule type" value="Genomic_DNA"/>
</dbReference>
<dbReference type="EMBL" id="M32413">
    <property type="protein sequence ID" value="AAB60700.1"/>
    <property type="status" value="JOINED"/>
    <property type="molecule type" value="Genomic_DNA"/>
</dbReference>
<dbReference type="EMBL" id="AJ246000">
    <property type="protein sequence ID" value="CAB55488.1"/>
    <property type="molecule type" value="mRNA"/>
</dbReference>
<dbReference type="EMBL" id="AK312673">
    <property type="protein sequence ID" value="BAG35555.1"/>
    <property type="molecule type" value="mRNA"/>
</dbReference>
<dbReference type="EMBL" id="AY233976">
    <property type="protein sequence ID" value="AAO48272.1"/>
    <property type="molecule type" value="Genomic_DNA"/>
</dbReference>
<dbReference type="EMBL" id="AL021940">
    <property type="status" value="NOT_ANNOTATED_CDS"/>
    <property type="molecule type" value="Genomic_DNA"/>
</dbReference>
<dbReference type="EMBL" id="CH471067">
    <property type="protein sequence ID" value="EAW90856.1"/>
    <property type="molecule type" value="Genomic_DNA"/>
</dbReference>
<dbReference type="EMBL" id="CH471067">
    <property type="protein sequence ID" value="EAW90858.1"/>
    <property type="molecule type" value="Genomic_DNA"/>
</dbReference>
<dbReference type="CCDS" id="CCDS53427.2">
    <molecule id="P14151-1"/>
</dbReference>
<dbReference type="RefSeq" id="NP_000646.3">
    <molecule id="P14151-1"/>
    <property type="nucleotide sequence ID" value="NM_000655.5"/>
</dbReference>
<dbReference type="PDB" id="2LGF">
    <property type="method" value="NMR"/>
    <property type="chains" value="B=349-363"/>
</dbReference>
<dbReference type="PDB" id="3CFW">
    <property type="method" value="X-ray"/>
    <property type="resolution" value="2.20 A"/>
    <property type="chains" value="A=39-194"/>
</dbReference>
<dbReference type="PDB" id="5VC1">
    <property type="method" value="X-ray"/>
    <property type="resolution" value="1.94 A"/>
    <property type="chains" value="A=39-195"/>
</dbReference>
<dbReference type="PDBsum" id="2LGF"/>
<dbReference type="PDBsum" id="3CFW"/>
<dbReference type="PDBsum" id="5VC1"/>
<dbReference type="BMRB" id="P14151"/>
<dbReference type="SMR" id="P14151"/>
<dbReference type="BioGRID" id="112302">
    <property type="interactions" value="15"/>
</dbReference>
<dbReference type="FunCoup" id="P14151">
    <property type="interactions" value="274"/>
</dbReference>
<dbReference type="IntAct" id="P14151">
    <property type="interactions" value="1"/>
</dbReference>
<dbReference type="STRING" id="9606.ENSP00000498227"/>
<dbReference type="BindingDB" id="P14151"/>
<dbReference type="ChEMBL" id="CHEMBL3161"/>
<dbReference type="DrugBank" id="DB16101">
    <property type="generic name" value="Baicalein"/>
</dbReference>
<dbReference type="DrugBank" id="DB12778">
    <property type="generic name" value="Rivipansel"/>
</dbReference>
<dbReference type="UniLectin" id="P14151"/>
<dbReference type="GlyConnect" id="346">
    <property type="glycosylation" value="26 N-Linked glycans (1 site)"/>
</dbReference>
<dbReference type="GlyCosmos" id="P14151">
    <property type="glycosylation" value="6 sites, 46 glycans"/>
</dbReference>
<dbReference type="GlyGen" id="P14151">
    <property type="glycosylation" value="7 sites, 52 N-linked glycans (2 sites)"/>
</dbReference>
<dbReference type="iPTMnet" id="P14151"/>
<dbReference type="PhosphoSitePlus" id="P14151"/>
<dbReference type="BioMuta" id="SELL"/>
<dbReference type="DMDM" id="126178"/>
<dbReference type="MassIVE" id="P14151"/>
<dbReference type="PaxDb" id="9606-ENSP00000236147"/>
<dbReference type="PeptideAtlas" id="P14151"/>
<dbReference type="ProteomicsDB" id="53028">
    <molecule id="P14151-1"/>
</dbReference>
<dbReference type="ProteomicsDB" id="53029">
    <molecule id="P14151-2"/>
</dbReference>
<dbReference type="ABCD" id="P14151">
    <property type="antibodies" value="4 sequenced antibodies"/>
</dbReference>
<dbReference type="Antibodypedia" id="3683">
    <property type="antibodies" value="1648 antibodies from 49 providers"/>
</dbReference>
<dbReference type="DNASU" id="6402"/>
<dbReference type="Ensembl" id="ENST00000236147.6">
    <molecule id="P14151-1"/>
    <property type="protein sequence ID" value="ENSP00000236147.5"/>
    <property type="gene ID" value="ENSG00000188404.10"/>
</dbReference>
<dbReference type="Ensembl" id="ENST00000650983.1">
    <molecule id="P14151-2"/>
    <property type="protein sequence ID" value="ENSP00000498227.1"/>
    <property type="gene ID" value="ENSG00000188404.10"/>
</dbReference>
<dbReference type="GeneID" id="6402"/>
<dbReference type="KEGG" id="hsa:6402"/>
<dbReference type="MANE-Select" id="ENST00000236147.6">
    <property type="protein sequence ID" value="ENSP00000236147.5"/>
    <property type="RefSeq nucleotide sequence ID" value="NM_000655.5"/>
    <property type="RefSeq protein sequence ID" value="NP_000646.3"/>
</dbReference>
<dbReference type="UCSC" id="uc001ggk.4">
    <molecule id="P14151-1"/>
    <property type="organism name" value="human"/>
</dbReference>
<dbReference type="AGR" id="HGNC:10720"/>
<dbReference type="CTD" id="6402"/>
<dbReference type="DisGeNET" id="6402"/>
<dbReference type="GeneCards" id="SELL"/>
<dbReference type="HGNC" id="HGNC:10720">
    <property type="gene designation" value="SELL"/>
</dbReference>
<dbReference type="HPA" id="ENSG00000188404">
    <property type="expression patterns" value="Group enriched (bone marrow, lymphoid tissue)"/>
</dbReference>
<dbReference type="MIM" id="153240">
    <property type="type" value="gene"/>
</dbReference>
<dbReference type="neXtProt" id="NX_P14151"/>
<dbReference type="OpenTargets" id="ENSG00000188404"/>
<dbReference type="PharmGKB" id="PA35642"/>
<dbReference type="VEuPathDB" id="HostDB:ENSG00000188404"/>
<dbReference type="eggNOG" id="KOG4297">
    <property type="taxonomic scope" value="Eukaryota"/>
</dbReference>
<dbReference type="GeneTree" id="ENSGT00940000162076"/>
<dbReference type="HOGENOM" id="CLU_065067_0_0_1"/>
<dbReference type="InParanoid" id="P14151"/>
<dbReference type="OrthoDB" id="406096at2759"/>
<dbReference type="PAN-GO" id="P14151">
    <property type="GO annotations" value="1 GO annotation based on evolutionary models"/>
</dbReference>
<dbReference type="PhylomeDB" id="P14151"/>
<dbReference type="TreeFam" id="TF326910"/>
<dbReference type="PathwayCommons" id="P14151"/>
<dbReference type="Reactome" id="R-HSA-198933">
    <property type="pathway name" value="Immunoregulatory interactions between a Lymphoid and a non-Lymphoid cell"/>
</dbReference>
<dbReference type="Reactome" id="R-HSA-202733">
    <property type="pathway name" value="Cell surface interactions at the vascular wall"/>
</dbReference>
<dbReference type="Reactome" id="R-HSA-6798695">
    <property type="pathway name" value="Neutrophil degranulation"/>
</dbReference>
<dbReference type="SignaLink" id="P14151"/>
<dbReference type="SIGNOR" id="P14151"/>
<dbReference type="BioGRID-ORCS" id="6402">
    <property type="hits" value="4 hits in 1143 CRISPR screens"/>
</dbReference>
<dbReference type="ChiTaRS" id="SELL">
    <property type="organism name" value="human"/>
</dbReference>
<dbReference type="EvolutionaryTrace" id="P14151"/>
<dbReference type="GeneWiki" id="L-selectin"/>
<dbReference type="GenomeRNAi" id="6402"/>
<dbReference type="Pharos" id="P14151">
    <property type="development level" value="Tchem"/>
</dbReference>
<dbReference type="PRO" id="PR:P14151"/>
<dbReference type="Proteomes" id="UP000005640">
    <property type="component" value="Chromosome 1"/>
</dbReference>
<dbReference type="RNAct" id="P14151">
    <property type="molecule type" value="protein"/>
</dbReference>
<dbReference type="Bgee" id="ENSG00000188404">
    <property type="expression patterns" value="Expressed in blood and 144 other cell types or tissues"/>
</dbReference>
<dbReference type="ExpressionAtlas" id="P14151">
    <property type="expression patterns" value="baseline and differential"/>
</dbReference>
<dbReference type="GO" id="GO:0009897">
    <property type="term" value="C:external side of plasma membrane"/>
    <property type="evidence" value="ECO:0000318"/>
    <property type="project" value="GO_Central"/>
</dbReference>
<dbReference type="GO" id="GO:0005615">
    <property type="term" value="C:extracellular space"/>
    <property type="evidence" value="ECO:0000318"/>
    <property type="project" value="GO_Central"/>
</dbReference>
<dbReference type="GO" id="GO:0005886">
    <property type="term" value="C:plasma membrane"/>
    <property type="evidence" value="ECO:0000314"/>
    <property type="project" value="UniProtKB"/>
</dbReference>
<dbReference type="GO" id="GO:0030667">
    <property type="term" value="C:secretory granule membrane"/>
    <property type="evidence" value="ECO:0000304"/>
    <property type="project" value="Reactome"/>
</dbReference>
<dbReference type="GO" id="GO:0005509">
    <property type="term" value="F:calcium ion binding"/>
    <property type="evidence" value="ECO:0000314"/>
    <property type="project" value="UniProtKB"/>
</dbReference>
<dbReference type="GO" id="GO:0030246">
    <property type="term" value="F:carbohydrate binding"/>
    <property type="evidence" value="ECO:0000304"/>
    <property type="project" value="ProtInc"/>
</dbReference>
<dbReference type="GO" id="GO:0043208">
    <property type="term" value="F:glycosphingolipid binding"/>
    <property type="evidence" value="ECO:0000304"/>
    <property type="project" value="BHF-UCL"/>
</dbReference>
<dbReference type="GO" id="GO:0008201">
    <property type="term" value="F:heparin binding"/>
    <property type="evidence" value="ECO:0000304"/>
    <property type="project" value="BHF-UCL"/>
</dbReference>
<dbReference type="GO" id="GO:0070492">
    <property type="term" value="F:oligosaccharide binding"/>
    <property type="evidence" value="ECO:0000315"/>
    <property type="project" value="UniProtKB"/>
</dbReference>
<dbReference type="GO" id="GO:0002020">
    <property type="term" value="F:protease binding"/>
    <property type="evidence" value="ECO:0000353"/>
    <property type="project" value="BHF-UCL"/>
</dbReference>
<dbReference type="GO" id="GO:0033691">
    <property type="term" value="F:sialic acid binding"/>
    <property type="evidence" value="ECO:0000318"/>
    <property type="project" value="GO_Central"/>
</dbReference>
<dbReference type="GO" id="GO:0016339">
    <property type="term" value="P:calcium-dependent cell-cell adhesion via plasma membrane cell adhesion molecules"/>
    <property type="evidence" value="ECO:0000315"/>
    <property type="project" value="UniProtKB"/>
</dbReference>
<dbReference type="GO" id="GO:0007155">
    <property type="term" value="P:cell adhesion"/>
    <property type="evidence" value="ECO:0000304"/>
    <property type="project" value="ProtInc"/>
</dbReference>
<dbReference type="GO" id="GO:0007157">
    <property type="term" value="P:heterophilic cell-cell adhesion via plasma membrane cell adhesion molecules"/>
    <property type="evidence" value="ECO:0000318"/>
    <property type="project" value="GO_Central"/>
</dbReference>
<dbReference type="GO" id="GO:0007159">
    <property type="term" value="P:leukocyte cell-cell adhesion"/>
    <property type="evidence" value="ECO:0000304"/>
    <property type="project" value="BHF-UCL"/>
</dbReference>
<dbReference type="GO" id="GO:0050901">
    <property type="term" value="P:leukocyte tethering or rolling"/>
    <property type="evidence" value="ECO:0000315"/>
    <property type="project" value="UniProtKB"/>
</dbReference>
<dbReference type="GO" id="GO:0034097">
    <property type="term" value="P:response to cytokine"/>
    <property type="evidence" value="ECO:0000318"/>
    <property type="project" value="GO_Central"/>
</dbReference>
<dbReference type="CDD" id="cd00033">
    <property type="entry name" value="CCP"/>
    <property type="match status" value="2"/>
</dbReference>
<dbReference type="CDD" id="cd03592">
    <property type="entry name" value="CLECT_selectins_like"/>
    <property type="match status" value="1"/>
</dbReference>
<dbReference type="CDD" id="cd00054">
    <property type="entry name" value="EGF_CA"/>
    <property type="match status" value="1"/>
</dbReference>
<dbReference type="FunFam" id="3.10.100.10:FF:000007">
    <property type="entry name" value="L-selectin"/>
    <property type="match status" value="1"/>
</dbReference>
<dbReference type="FunFam" id="2.10.25.10:FF:000176">
    <property type="entry name" value="Selectin P"/>
    <property type="match status" value="1"/>
</dbReference>
<dbReference type="FunFam" id="2.10.70.10:FF:000001">
    <property type="entry name" value="Selectin P"/>
    <property type="match status" value="2"/>
</dbReference>
<dbReference type="Gene3D" id="2.10.70.10">
    <property type="entry name" value="Complement Module, domain 1"/>
    <property type="match status" value="2"/>
</dbReference>
<dbReference type="Gene3D" id="2.10.25.10">
    <property type="entry name" value="Laminin"/>
    <property type="match status" value="1"/>
</dbReference>
<dbReference type="Gene3D" id="3.10.100.10">
    <property type="entry name" value="Mannose-Binding Protein A, subunit A"/>
    <property type="match status" value="1"/>
</dbReference>
<dbReference type="InterPro" id="IPR001304">
    <property type="entry name" value="C-type_lectin-like"/>
</dbReference>
<dbReference type="InterPro" id="IPR016186">
    <property type="entry name" value="C-type_lectin-like/link_sf"/>
</dbReference>
<dbReference type="InterPro" id="IPR018378">
    <property type="entry name" value="C-type_lectin_CS"/>
</dbReference>
<dbReference type="InterPro" id="IPR050350">
    <property type="entry name" value="Compl-Cell_Adhes-Reg"/>
</dbReference>
<dbReference type="InterPro" id="IPR016187">
    <property type="entry name" value="CTDL_fold"/>
</dbReference>
<dbReference type="InterPro" id="IPR000742">
    <property type="entry name" value="EGF-like_dom"/>
</dbReference>
<dbReference type="InterPro" id="IPR016348">
    <property type="entry name" value="L-selectin"/>
</dbReference>
<dbReference type="InterPro" id="IPR033991">
    <property type="entry name" value="Selectin_CTLD"/>
</dbReference>
<dbReference type="InterPro" id="IPR002396">
    <property type="entry name" value="Selectin_superfamily"/>
</dbReference>
<dbReference type="InterPro" id="IPR035976">
    <property type="entry name" value="Sushi/SCR/CCP_sf"/>
</dbReference>
<dbReference type="InterPro" id="IPR000436">
    <property type="entry name" value="Sushi_SCR_CCP_dom"/>
</dbReference>
<dbReference type="PANTHER" id="PTHR19325">
    <property type="entry name" value="COMPLEMENT COMPONENT-RELATED SUSHI DOMAIN-CONTAINING"/>
    <property type="match status" value="1"/>
</dbReference>
<dbReference type="PANTHER" id="PTHR19325:SF543">
    <property type="entry name" value="L-SELECTIN"/>
    <property type="match status" value="1"/>
</dbReference>
<dbReference type="Pfam" id="PF00008">
    <property type="entry name" value="EGF"/>
    <property type="match status" value="1"/>
</dbReference>
<dbReference type="Pfam" id="PF00059">
    <property type="entry name" value="Lectin_C"/>
    <property type="match status" value="1"/>
</dbReference>
<dbReference type="Pfam" id="PF00084">
    <property type="entry name" value="Sushi"/>
    <property type="match status" value="2"/>
</dbReference>
<dbReference type="PIRSF" id="PIRSF002421">
    <property type="entry name" value="L-selectin"/>
    <property type="match status" value="1"/>
</dbReference>
<dbReference type="PRINTS" id="PR00343">
    <property type="entry name" value="SELECTIN"/>
</dbReference>
<dbReference type="SMART" id="SM00032">
    <property type="entry name" value="CCP"/>
    <property type="match status" value="2"/>
</dbReference>
<dbReference type="SMART" id="SM00034">
    <property type="entry name" value="CLECT"/>
    <property type="match status" value="1"/>
</dbReference>
<dbReference type="SMART" id="SM00181">
    <property type="entry name" value="EGF"/>
    <property type="match status" value="1"/>
</dbReference>
<dbReference type="SUPFAM" id="SSF56436">
    <property type="entry name" value="C-type lectin-like"/>
    <property type="match status" value="1"/>
</dbReference>
<dbReference type="SUPFAM" id="SSF57535">
    <property type="entry name" value="Complement control module/SCR domain"/>
    <property type="match status" value="2"/>
</dbReference>
<dbReference type="SUPFAM" id="SSF57196">
    <property type="entry name" value="EGF/Laminin"/>
    <property type="match status" value="1"/>
</dbReference>
<dbReference type="PROSITE" id="PS00615">
    <property type="entry name" value="C_TYPE_LECTIN_1"/>
    <property type="match status" value="1"/>
</dbReference>
<dbReference type="PROSITE" id="PS50041">
    <property type="entry name" value="C_TYPE_LECTIN_2"/>
    <property type="match status" value="1"/>
</dbReference>
<dbReference type="PROSITE" id="PS00022">
    <property type="entry name" value="EGF_1"/>
    <property type="match status" value="1"/>
</dbReference>
<dbReference type="PROSITE" id="PS01186">
    <property type="entry name" value="EGF_2"/>
    <property type="match status" value="1"/>
</dbReference>
<dbReference type="PROSITE" id="PS50026">
    <property type="entry name" value="EGF_3"/>
    <property type="match status" value="1"/>
</dbReference>
<dbReference type="PROSITE" id="PS50923">
    <property type="entry name" value="SUSHI"/>
    <property type="match status" value="2"/>
</dbReference>